<evidence type="ECO:0000256" key="1">
    <source>
        <dbReference type="SAM" id="MobiDB-lite"/>
    </source>
</evidence>
<evidence type="ECO:0000269" key="2">
    <source>
    </source>
</evidence>
<evidence type="ECO:0000269" key="3">
    <source>
    </source>
</evidence>
<evidence type="ECO:0000269" key="4">
    <source>
    </source>
</evidence>
<evidence type="ECO:0000269" key="5">
    <source>
    </source>
</evidence>
<evidence type="ECO:0000269" key="6">
    <source>
    </source>
</evidence>
<evidence type="ECO:0000269" key="7">
    <source>
    </source>
</evidence>
<evidence type="ECO:0000269" key="8">
    <source>
    </source>
</evidence>
<evidence type="ECO:0000269" key="9">
    <source>
    </source>
</evidence>
<evidence type="ECO:0000303" key="10">
    <source>
    </source>
</evidence>
<evidence type="ECO:0000303" key="11">
    <source ref="1"/>
</evidence>
<evidence type="ECO:0000303" key="12">
    <source ref="7"/>
</evidence>
<evidence type="ECO:0000305" key="13"/>
<evidence type="ECO:0000305" key="14">
    <source>
    </source>
</evidence>
<evidence type="ECO:0000312" key="15">
    <source>
        <dbReference type="Araport" id="AT3G09440"/>
    </source>
</evidence>
<evidence type="ECO:0000312" key="16">
    <source>
        <dbReference type="EMBL" id="AAF14038.1"/>
    </source>
</evidence>
<evidence type="ECO:0000312" key="17">
    <source>
        <dbReference type="EMBL" id="AAF23276.1"/>
    </source>
</evidence>
<reference key="1">
    <citation type="online journal article" date="1998" name="Plant Gene Register">
        <title>At-hsc70-3 encodes a cytosolic Hsp70 in Arabidopsis thaliana.</title>
        <authorList>
            <person name="Hsieh K."/>
            <person name="Wang Y.-C."/>
            <person name="Lin B.-L."/>
        </authorList>
        <locator>PGR98-139</locator>
    </citation>
    <scope>NUCLEOTIDE SEQUENCE [MRNA]</scope>
    <source>
        <strain>cv. Columbia</strain>
    </source>
</reference>
<reference key="2">
    <citation type="journal article" date="2000" name="Nature">
        <title>Sequence and analysis of chromosome 3 of the plant Arabidopsis thaliana.</title>
        <authorList>
            <person name="Salanoubat M."/>
            <person name="Lemcke K."/>
            <person name="Rieger M."/>
            <person name="Ansorge W."/>
            <person name="Unseld M."/>
            <person name="Fartmann B."/>
            <person name="Valle G."/>
            <person name="Bloecker H."/>
            <person name="Perez-Alonso M."/>
            <person name="Obermaier B."/>
            <person name="Delseny M."/>
            <person name="Boutry M."/>
            <person name="Grivell L.A."/>
            <person name="Mache R."/>
            <person name="Puigdomenech P."/>
            <person name="De Simone V."/>
            <person name="Choisne N."/>
            <person name="Artiguenave F."/>
            <person name="Robert C."/>
            <person name="Brottier P."/>
            <person name="Wincker P."/>
            <person name="Cattolico L."/>
            <person name="Weissenbach J."/>
            <person name="Saurin W."/>
            <person name="Quetier F."/>
            <person name="Schaefer M."/>
            <person name="Mueller-Auer S."/>
            <person name="Gabel C."/>
            <person name="Fuchs M."/>
            <person name="Benes V."/>
            <person name="Wurmbach E."/>
            <person name="Drzonek H."/>
            <person name="Erfle H."/>
            <person name="Jordan N."/>
            <person name="Bangert S."/>
            <person name="Wiedelmann R."/>
            <person name="Kranz H."/>
            <person name="Voss H."/>
            <person name="Holland R."/>
            <person name="Brandt P."/>
            <person name="Nyakatura G."/>
            <person name="Vezzi A."/>
            <person name="D'Angelo M."/>
            <person name="Pallavicini A."/>
            <person name="Toppo S."/>
            <person name="Simionati B."/>
            <person name="Conrad A."/>
            <person name="Hornischer K."/>
            <person name="Kauer G."/>
            <person name="Loehnert T.-H."/>
            <person name="Nordsiek G."/>
            <person name="Reichelt J."/>
            <person name="Scharfe M."/>
            <person name="Schoen O."/>
            <person name="Bargues M."/>
            <person name="Terol J."/>
            <person name="Climent J."/>
            <person name="Navarro P."/>
            <person name="Collado C."/>
            <person name="Perez-Perez A."/>
            <person name="Ottenwaelder B."/>
            <person name="Duchemin D."/>
            <person name="Cooke R."/>
            <person name="Laudie M."/>
            <person name="Berger-Llauro C."/>
            <person name="Purnelle B."/>
            <person name="Masuy D."/>
            <person name="de Haan M."/>
            <person name="Maarse A.C."/>
            <person name="Alcaraz J.-P."/>
            <person name="Cottet A."/>
            <person name="Casacuberta E."/>
            <person name="Monfort A."/>
            <person name="Argiriou A."/>
            <person name="Flores M."/>
            <person name="Liguori R."/>
            <person name="Vitale D."/>
            <person name="Mannhaupt G."/>
            <person name="Haase D."/>
            <person name="Schoof H."/>
            <person name="Rudd S."/>
            <person name="Zaccaria P."/>
            <person name="Mewes H.-W."/>
            <person name="Mayer K.F.X."/>
            <person name="Kaul S."/>
            <person name="Town C.D."/>
            <person name="Koo H.L."/>
            <person name="Tallon L.J."/>
            <person name="Jenkins J."/>
            <person name="Rooney T."/>
            <person name="Rizzo M."/>
            <person name="Walts A."/>
            <person name="Utterback T."/>
            <person name="Fujii C.Y."/>
            <person name="Shea T.P."/>
            <person name="Creasy T.H."/>
            <person name="Haas B."/>
            <person name="Maiti R."/>
            <person name="Wu D."/>
            <person name="Peterson J."/>
            <person name="Van Aken S."/>
            <person name="Pai G."/>
            <person name="Militscher J."/>
            <person name="Sellers P."/>
            <person name="Gill J.E."/>
            <person name="Feldblyum T.V."/>
            <person name="Preuss D."/>
            <person name="Lin X."/>
            <person name="Nierman W.C."/>
            <person name="Salzberg S.L."/>
            <person name="White O."/>
            <person name="Venter J.C."/>
            <person name="Fraser C.M."/>
            <person name="Kaneko T."/>
            <person name="Nakamura Y."/>
            <person name="Sato S."/>
            <person name="Kato T."/>
            <person name="Asamizu E."/>
            <person name="Sasamoto S."/>
            <person name="Kimura T."/>
            <person name="Idesawa K."/>
            <person name="Kawashima K."/>
            <person name="Kishida Y."/>
            <person name="Kiyokawa C."/>
            <person name="Kohara M."/>
            <person name="Matsumoto M."/>
            <person name="Matsuno A."/>
            <person name="Muraki A."/>
            <person name="Nakayama S."/>
            <person name="Nakazaki N."/>
            <person name="Shinpo S."/>
            <person name="Takeuchi C."/>
            <person name="Wada T."/>
            <person name="Watanabe A."/>
            <person name="Yamada M."/>
            <person name="Yasuda M."/>
            <person name="Tabata S."/>
        </authorList>
    </citation>
    <scope>NUCLEOTIDE SEQUENCE [LARGE SCALE GENOMIC DNA]</scope>
    <source>
        <strain>cv. Columbia</strain>
    </source>
</reference>
<reference key="3">
    <citation type="journal article" date="2017" name="Plant J.">
        <title>Araport11: a complete reannotation of the Arabidopsis thaliana reference genome.</title>
        <authorList>
            <person name="Cheng C.Y."/>
            <person name="Krishnakumar V."/>
            <person name="Chan A.P."/>
            <person name="Thibaud-Nissen F."/>
            <person name="Schobel S."/>
            <person name="Town C.D."/>
        </authorList>
    </citation>
    <scope>GENOME REANNOTATION</scope>
    <source>
        <strain>cv. Columbia</strain>
    </source>
</reference>
<reference key="4">
    <citation type="journal article" date="2003" name="Science">
        <title>Empirical analysis of transcriptional activity in the Arabidopsis genome.</title>
        <authorList>
            <person name="Yamada K."/>
            <person name="Lim J."/>
            <person name="Dale J.M."/>
            <person name="Chen H."/>
            <person name="Shinn P."/>
            <person name="Palm C.J."/>
            <person name="Southwick A.M."/>
            <person name="Wu H.C."/>
            <person name="Kim C.J."/>
            <person name="Nguyen M."/>
            <person name="Pham P.K."/>
            <person name="Cheuk R.F."/>
            <person name="Karlin-Newmann G."/>
            <person name="Liu S.X."/>
            <person name="Lam B."/>
            <person name="Sakano H."/>
            <person name="Wu T."/>
            <person name="Yu G."/>
            <person name="Miranda M."/>
            <person name="Quach H.L."/>
            <person name="Tripp M."/>
            <person name="Chang C.H."/>
            <person name="Lee J.M."/>
            <person name="Toriumi M.J."/>
            <person name="Chan M.M."/>
            <person name="Tang C.C."/>
            <person name="Onodera C.S."/>
            <person name="Deng J.M."/>
            <person name="Akiyama K."/>
            <person name="Ansari Y."/>
            <person name="Arakawa T."/>
            <person name="Banh J."/>
            <person name="Banno F."/>
            <person name="Bowser L."/>
            <person name="Brooks S.Y."/>
            <person name="Carninci P."/>
            <person name="Chao Q."/>
            <person name="Choy N."/>
            <person name="Enju A."/>
            <person name="Goldsmith A.D."/>
            <person name="Gurjal M."/>
            <person name="Hansen N.F."/>
            <person name="Hayashizaki Y."/>
            <person name="Johnson-Hopson C."/>
            <person name="Hsuan V.W."/>
            <person name="Iida K."/>
            <person name="Karnes M."/>
            <person name="Khan S."/>
            <person name="Koesema E."/>
            <person name="Ishida J."/>
            <person name="Jiang P.X."/>
            <person name="Jones T."/>
            <person name="Kawai J."/>
            <person name="Kamiya A."/>
            <person name="Meyers C."/>
            <person name="Nakajima M."/>
            <person name="Narusaka M."/>
            <person name="Seki M."/>
            <person name="Sakurai T."/>
            <person name="Satou M."/>
            <person name="Tamse R."/>
            <person name="Vaysberg M."/>
            <person name="Wallender E.K."/>
            <person name="Wong C."/>
            <person name="Yamamura Y."/>
            <person name="Yuan S."/>
            <person name="Shinozaki K."/>
            <person name="Davis R.W."/>
            <person name="Theologis A."/>
            <person name="Ecker J.R."/>
        </authorList>
    </citation>
    <scope>NUCLEOTIDE SEQUENCE [LARGE SCALE MRNA]</scope>
    <source>
        <strain>cv. Columbia</strain>
    </source>
</reference>
<reference key="5">
    <citation type="journal article" date="1996" name="Plant J.">
        <title>Further progress towards a catalogue of all Arabidopsis genes: analysis of a set of 5000 non-redundant ESTs.</title>
        <authorList>
            <person name="Cooke R."/>
            <person name="Raynal M."/>
            <person name="Laudie M."/>
            <person name="Grellet F."/>
            <person name="Delseny M."/>
            <person name="Morris P.-C."/>
            <person name="Guerrier D."/>
            <person name="Giraudat J."/>
            <person name="Quigley F."/>
            <person name="Clabault G."/>
            <person name="Li Y.-F."/>
            <person name="Mache R."/>
            <person name="Krivitzky M."/>
            <person name="Gy I.J.-J."/>
            <person name="Kreis M."/>
            <person name="Lecharny A."/>
            <person name="Parmentier Y."/>
            <person name="Marbach J."/>
            <person name="Fleck J."/>
            <person name="Clement B."/>
            <person name="Philipps G."/>
            <person name="Herve C."/>
            <person name="Bardet C."/>
            <person name="Tremousaygue D."/>
            <person name="Lescure B."/>
            <person name="Lacomme C."/>
            <person name="Roby D."/>
            <person name="Jourjon M.-F."/>
            <person name="Chabrier P."/>
            <person name="Charpenteau J.-L."/>
            <person name="Desprez T."/>
            <person name="Amselem J."/>
            <person name="Chiapello H."/>
            <person name="Hoefte H."/>
        </authorList>
    </citation>
    <scope>NUCLEOTIDE SEQUENCE [LARGE SCALE MRNA] OF 1-117</scope>
    <source>
        <strain>cv. Columbia</strain>
    </source>
</reference>
<reference key="6">
    <citation type="submission" date="2005-03" db="EMBL/GenBank/DDBJ databases">
        <title>Large-scale analysis of RIKEN Arabidopsis full-length (RAFL) cDNAs.</title>
        <authorList>
            <person name="Totoki Y."/>
            <person name="Seki M."/>
            <person name="Ishida J."/>
            <person name="Nakajima M."/>
            <person name="Enju A."/>
            <person name="Kamiya A."/>
            <person name="Narusaka M."/>
            <person name="Shin-i T."/>
            <person name="Nakagawa M."/>
            <person name="Sakamoto N."/>
            <person name="Oishi K."/>
            <person name="Kohara Y."/>
            <person name="Kobayashi M."/>
            <person name="Toyoda A."/>
            <person name="Sakaki Y."/>
            <person name="Sakurai T."/>
            <person name="Iida K."/>
            <person name="Akiyama K."/>
            <person name="Satou M."/>
            <person name="Toyoda T."/>
            <person name="Konagaya A."/>
            <person name="Carninci P."/>
            <person name="Kawai J."/>
            <person name="Hayashizaki Y."/>
            <person name="Shinozaki K."/>
        </authorList>
    </citation>
    <scope>NUCLEOTIDE SEQUENCE [LARGE SCALE MRNA] OF 496-649</scope>
    <source>
        <strain>cv. Columbia</strain>
    </source>
</reference>
<reference key="7">
    <citation type="submission" date="1996-10" db="EMBL/GenBank/DDBJ databases">
        <title>Specific Hsp70s are expressed and accumulated during silique development in Arabidopsis.</title>
        <authorList>
            <person name="Wang Y.C."/>
            <person name="Lee S.P."/>
            <person name="Shieh K."/>
            <person name="Hu S.M."/>
            <person name="Wang C."/>
            <person name="Lin B.L."/>
        </authorList>
    </citation>
    <scope>NUCLEOTIDE SEQUENCE [MRNA] OF 550-649</scope>
    <source>
        <strain>cv. Columbia</strain>
    </source>
</reference>
<reference key="8">
    <citation type="journal article" date="2001" name="Cell Stress Chaperones">
        <title>Genomic analysis of the Hsp70 superfamily in Arabidopsis thaliana.</title>
        <authorList>
            <person name="Lin B.L."/>
            <person name="Wang J.S."/>
            <person name="Liu H.C."/>
            <person name="Chen R.W."/>
            <person name="Meyer Y."/>
            <person name="Barakat A."/>
            <person name="Delseny M."/>
        </authorList>
    </citation>
    <scope>GENE FAMILY</scope>
    <scope>NOMENCLATURE</scope>
</reference>
<reference key="9">
    <citation type="journal article" date="2001" name="Plant Physiol.">
        <title>Comprehensive expression profile analysis of the Arabidopsis Hsp70 gene family.</title>
        <authorList>
            <person name="Sung D.Y."/>
            <person name="Vierling E."/>
            <person name="Guy C.L."/>
        </authorList>
    </citation>
    <scope>DNAK GENE SUBFAMILY</scope>
    <scope>INDUCTION</scope>
    <scope>DEVELOPMENTAL STAGE</scope>
</reference>
<reference key="10">
    <citation type="journal article" date="2001" name="Proc. Natl. Acad. Sci. U.S.A.">
        <title>Partial purification and identification of GDP-mannose 3',5'-epimerase of Arabidopsis thaliana, a key enzyme of the plant vitamin C pathway.</title>
        <authorList>
            <person name="Wolucka B.A."/>
            <person name="Persiau G."/>
            <person name="Van Doorsselaere J."/>
            <person name="Davey M.W."/>
            <person name="Demol H."/>
            <person name="Vandekerckhove J."/>
            <person name="Van Montagu M."/>
            <person name="Zabeau M."/>
            <person name="Boerjan W."/>
        </authorList>
    </citation>
    <scope>SUBUNIT</scope>
</reference>
<reference key="11">
    <citation type="journal article" date="2003" name="J. Biol. Chem.">
        <title>GDP-mannose 3',5'-epimerase forms GDP-L-gulose, a putative intermediate for the de novo biosynthesis of vitamin C in plants.</title>
        <authorList>
            <person name="Wolucka B.A."/>
            <person name="Van Montagu M."/>
        </authorList>
    </citation>
    <scope>IDENTIFICATION BY MASS SPECTROMETRY</scope>
</reference>
<reference key="12">
    <citation type="journal article" date="2003" name="J. Cell. Biochem.">
        <title>A proteomic study of the Arabidopsis nuclear matrix.</title>
        <authorList>
            <person name="Calikowski T.T."/>
            <person name="Meulia T."/>
            <person name="Meier I."/>
        </authorList>
    </citation>
    <scope>SUBCELLULAR LOCATION</scope>
</reference>
<reference key="13">
    <citation type="journal article" date="2005" name="Plant Physiol.">
        <title>Virus induction of heat shock protein 70 reflects a general response to protein accumulation in the plant cytosol.</title>
        <authorList>
            <person name="Aparicio F."/>
            <person name="Thomas C.L."/>
            <person name="Lederer C."/>
            <person name="Niu Y."/>
            <person name="Wang D."/>
            <person name="Maule A.J."/>
        </authorList>
    </citation>
    <scope>INDUCTION</scope>
</reference>
<reference key="14">
    <citation type="journal article" date="2007" name="Mol. Cell. Proteomics">
        <title>Multidimensional protein identification technology (MudPIT) analysis of ubiquitinated proteins in plants.</title>
        <authorList>
            <person name="Maor R."/>
            <person name="Jones A."/>
            <person name="Nuehse T.S."/>
            <person name="Studholme D.J."/>
            <person name="Peck S.C."/>
            <person name="Shirasu K."/>
        </authorList>
    </citation>
    <scope>IDENTIFICATION BY MASS SPECTROMETRY [LARGE SCALE ANALYSIS]</scope>
    <source>
        <strain>cv. Landsberg erecta</strain>
    </source>
</reference>
<reference key="15">
    <citation type="journal article" date="2007" name="Plant Cell">
        <title>Interaction between SGT1 and cytosolic/nuclear HSC70 chaperones regulates Arabidopsis immune responses.</title>
        <authorList>
            <person name="Noel L.D."/>
            <person name="Cagna G."/>
            <person name="Stuttmann J."/>
            <person name="Wirthmueller L."/>
            <person name="Betsuyaku S."/>
            <person name="Witte C.P."/>
            <person name="Bhat R."/>
            <person name="Pochon N."/>
            <person name="Colby T."/>
            <person name="Parker J.E."/>
        </authorList>
    </citation>
    <scope>INTERACTION WITH SGT1B</scope>
</reference>
<reference key="16">
    <citation type="journal article" date="2009" name="J. Proteomics">
        <title>Phosphoproteomic analysis of nuclei-enriched fractions from Arabidopsis thaliana.</title>
        <authorList>
            <person name="Jones A.M.E."/>
            <person name="MacLean D."/>
            <person name="Studholme D.J."/>
            <person name="Serna-Sanz A."/>
            <person name="Andreasson E."/>
            <person name="Rathjen J.P."/>
            <person name="Peck S.C."/>
        </authorList>
    </citation>
    <scope>IDENTIFICATION BY MASS SPECTROMETRY [LARGE SCALE ANALYSIS]</scope>
    <source>
        <strain>cv. Columbia</strain>
    </source>
</reference>
<reference key="17">
    <citation type="journal article" date="2009" name="Plant Physiol.">
        <title>WPP-domain proteins mimic the activity of the HSC70-1 chaperone in preventing mistargeting of RanGAP1-anchoring protein WIT1.</title>
        <authorList>
            <person name="Brkljacic J."/>
            <person name="Zhao Q."/>
            <person name="Meier I."/>
        </authorList>
    </citation>
    <scope>INTERACTION WITH WPP1</scope>
</reference>
<reference key="18">
    <citation type="journal article" date="2010" name="Plant Cell">
        <title>The deubiquitinating enzyme AMSH3 is required for intracellular trafficking and vacuole biogenesis in Arabidopsis thaliana.</title>
        <authorList>
            <person name="Isono E."/>
            <person name="Katsiarimpa A."/>
            <person name="Mueller I.K."/>
            <person name="Anzenberger F."/>
            <person name="Stierhof Y.-D."/>
            <person name="Geldner N."/>
            <person name="Chory J."/>
            <person name="Schwechheimer C."/>
        </authorList>
    </citation>
    <scope>INTERACTION WITH AMSH3</scope>
</reference>
<reference key="19">
    <citation type="journal article" date="2014" name="Plant Cell">
        <title>A DEK domain-containing protein modulates chromatin structure and function in Arabidopsis.</title>
        <authorList>
            <person name="Waidmann S."/>
            <person name="Kusenda B."/>
            <person name="Mayerhofer J."/>
            <person name="Mechtler K."/>
            <person name="Jonak C."/>
        </authorList>
    </citation>
    <scope>INTERACTION WITH DEK3</scope>
    <scope>IDENTIFICATION BY MASS SPECTROMETRY</scope>
    <source>
        <strain>cv. Columbia</strain>
    </source>
</reference>
<comment type="function">
    <text evidence="13">In cooperation with other chaperones, Hsp70s are key components that facilitate folding of de novo synthesized proteins, assist translocation of precursor proteins into organelles, and are responsible for degradation of damaged protein under stress conditions.</text>
</comment>
<comment type="subunit">
    <text evidence="3 6 7 8 9">Interacts with GDP-mannose 3,5-epimerase and SGT1B (via SGS domain). Binds to the deubiquitinating enzyme AMSH3. Interacts with WPP1. Interacts with DEK3 (PubMed:25387881).</text>
</comment>
<comment type="subcellular location">
    <subcellularLocation>
        <location evidence="14">Cytoplasm</location>
    </subcellularLocation>
    <subcellularLocation>
        <location evidence="4">Nucleus matrix</location>
    </subcellularLocation>
</comment>
<comment type="developmental stage">
    <text evidence="2">Down-regulated during seed maturation. Up-regulated during germination.</text>
</comment>
<comment type="induction">
    <text evidence="2 5">By heat shock and by cold. Up-regulated by virus infection.</text>
</comment>
<comment type="similarity">
    <text evidence="13">Belongs to the heat shock protein 70 (TC 1.A.33) family. DnaK subfamily.</text>
</comment>
<organism>
    <name type="scientific">Arabidopsis thaliana</name>
    <name type="common">Mouse-ear cress</name>
    <dbReference type="NCBI Taxonomy" id="3702"/>
    <lineage>
        <taxon>Eukaryota</taxon>
        <taxon>Viridiplantae</taxon>
        <taxon>Streptophyta</taxon>
        <taxon>Embryophyta</taxon>
        <taxon>Tracheophyta</taxon>
        <taxon>Spermatophyta</taxon>
        <taxon>Magnoliopsida</taxon>
        <taxon>eudicotyledons</taxon>
        <taxon>Gunneridae</taxon>
        <taxon>Pentapetalae</taxon>
        <taxon>rosids</taxon>
        <taxon>malvids</taxon>
        <taxon>Brassicales</taxon>
        <taxon>Brassicaceae</taxon>
        <taxon>Camelineae</taxon>
        <taxon>Arabidopsis</taxon>
    </lineage>
</organism>
<dbReference type="EMBL" id="Y17053">
    <property type="protein sequence ID" value="CAA76606.1"/>
    <property type="molecule type" value="mRNA"/>
</dbReference>
<dbReference type="EMBL" id="AC011436">
    <property type="protein sequence ID" value="AAF14038.1"/>
    <property type="molecule type" value="Genomic_DNA"/>
</dbReference>
<dbReference type="EMBL" id="AC016661">
    <property type="protein sequence ID" value="AAF23276.1"/>
    <property type="molecule type" value="Genomic_DNA"/>
</dbReference>
<dbReference type="EMBL" id="CP002686">
    <property type="protein sequence ID" value="AEE74767.1"/>
    <property type="molecule type" value="Genomic_DNA"/>
</dbReference>
<dbReference type="EMBL" id="CP002686">
    <property type="protein sequence ID" value="AEE74768.1"/>
    <property type="molecule type" value="Genomic_DNA"/>
</dbReference>
<dbReference type="EMBL" id="CP002686">
    <property type="protein sequence ID" value="ANM64320.1"/>
    <property type="molecule type" value="Genomic_DNA"/>
</dbReference>
<dbReference type="EMBL" id="CP002686">
    <property type="protein sequence ID" value="ANM64321.1"/>
    <property type="molecule type" value="Genomic_DNA"/>
</dbReference>
<dbReference type="EMBL" id="AY050896">
    <property type="protein sequence ID" value="AAK92833.1"/>
    <property type="molecule type" value="mRNA"/>
</dbReference>
<dbReference type="EMBL" id="AY096676">
    <property type="protein sequence ID" value="AAM20310.1"/>
    <property type="molecule type" value="mRNA"/>
</dbReference>
<dbReference type="EMBL" id="AY102116">
    <property type="protein sequence ID" value="AAM26685.1"/>
    <property type="molecule type" value="mRNA"/>
</dbReference>
<dbReference type="EMBL" id="BT001066">
    <property type="protein sequence ID" value="AAN46823.1"/>
    <property type="molecule type" value="mRNA"/>
</dbReference>
<dbReference type="EMBL" id="F20026">
    <property type="protein sequence ID" value="CAA23383.1"/>
    <property type="molecule type" value="mRNA"/>
</dbReference>
<dbReference type="EMBL" id="AK222065">
    <property type="protein sequence ID" value="BAD94875.1"/>
    <property type="molecule type" value="mRNA"/>
</dbReference>
<dbReference type="EMBL" id="Y08903">
    <property type="protein sequence ID" value="CAA70111.1"/>
    <property type="molecule type" value="mRNA"/>
</dbReference>
<dbReference type="RefSeq" id="NP_001189847.1">
    <property type="nucleotide sequence ID" value="NM_001202918.1"/>
</dbReference>
<dbReference type="RefSeq" id="NP_001319509.1">
    <property type="nucleotide sequence ID" value="NM_001337819.1"/>
</dbReference>
<dbReference type="RefSeq" id="NP_001319510.1">
    <property type="nucleotide sequence ID" value="NM_001337820.1"/>
</dbReference>
<dbReference type="RefSeq" id="NP_187555.1">
    <property type="nucleotide sequence ID" value="NM_111778.4"/>
</dbReference>
<dbReference type="SMR" id="O65719"/>
<dbReference type="BioGRID" id="5436">
    <property type="interactions" value="30"/>
</dbReference>
<dbReference type="FunCoup" id="O65719">
    <property type="interactions" value="2050"/>
</dbReference>
<dbReference type="IntAct" id="O65719">
    <property type="interactions" value="5"/>
</dbReference>
<dbReference type="STRING" id="3702.O65719"/>
<dbReference type="iPTMnet" id="O65719"/>
<dbReference type="MetOSite" id="O65719"/>
<dbReference type="SwissPalm" id="O65719"/>
<dbReference type="PaxDb" id="3702-AT3G09440.1"/>
<dbReference type="ProteomicsDB" id="230157"/>
<dbReference type="EnsemblPlants" id="AT3G09440.1">
    <property type="protein sequence ID" value="AT3G09440.1"/>
    <property type="gene ID" value="AT3G09440"/>
</dbReference>
<dbReference type="EnsemblPlants" id="AT3G09440.2">
    <property type="protein sequence ID" value="AT3G09440.2"/>
    <property type="gene ID" value="AT3G09440"/>
</dbReference>
<dbReference type="EnsemblPlants" id="AT3G09440.3">
    <property type="protein sequence ID" value="AT3G09440.3"/>
    <property type="gene ID" value="AT3G09440"/>
</dbReference>
<dbReference type="EnsemblPlants" id="AT3G09440.4">
    <property type="protein sequence ID" value="AT3G09440.4"/>
    <property type="gene ID" value="AT3G09440"/>
</dbReference>
<dbReference type="GeneID" id="820102"/>
<dbReference type="Gramene" id="AT3G09440.1">
    <property type="protein sequence ID" value="AT3G09440.1"/>
    <property type="gene ID" value="AT3G09440"/>
</dbReference>
<dbReference type="Gramene" id="AT3G09440.2">
    <property type="protein sequence ID" value="AT3G09440.2"/>
    <property type="gene ID" value="AT3G09440"/>
</dbReference>
<dbReference type="Gramene" id="AT3G09440.3">
    <property type="protein sequence ID" value="AT3G09440.3"/>
    <property type="gene ID" value="AT3G09440"/>
</dbReference>
<dbReference type="Gramene" id="AT3G09440.4">
    <property type="protein sequence ID" value="AT3G09440.4"/>
    <property type="gene ID" value="AT3G09440"/>
</dbReference>
<dbReference type="KEGG" id="ath:AT3G09440"/>
<dbReference type="Araport" id="AT3G09440"/>
<dbReference type="TAIR" id="AT3G09440"/>
<dbReference type="eggNOG" id="KOG0101">
    <property type="taxonomic scope" value="Eukaryota"/>
</dbReference>
<dbReference type="HOGENOM" id="CLU_005965_5_1_1"/>
<dbReference type="InParanoid" id="O65719"/>
<dbReference type="OMA" id="HRQEENW"/>
<dbReference type="OrthoDB" id="1082411at2759"/>
<dbReference type="PhylomeDB" id="O65719"/>
<dbReference type="CD-CODE" id="4299E36E">
    <property type="entry name" value="Nucleolus"/>
</dbReference>
<dbReference type="PRO" id="PR:O65719"/>
<dbReference type="Proteomes" id="UP000006548">
    <property type="component" value="Chromosome 3"/>
</dbReference>
<dbReference type="ExpressionAtlas" id="O65719">
    <property type="expression patterns" value="baseline and differential"/>
</dbReference>
<dbReference type="GO" id="GO:0048046">
    <property type="term" value="C:apoplast"/>
    <property type="evidence" value="ECO:0007005"/>
    <property type="project" value="TAIR"/>
</dbReference>
<dbReference type="GO" id="GO:0009507">
    <property type="term" value="C:chloroplast"/>
    <property type="evidence" value="ECO:0007005"/>
    <property type="project" value="TAIR"/>
</dbReference>
<dbReference type="GO" id="GO:0005829">
    <property type="term" value="C:cytosol"/>
    <property type="evidence" value="ECO:0007005"/>
    <property type="project" value="TAIR"/>
</dbReference>
<dbReference type="GO" id="GO:0022626">
    <property type="term" value="C:cytosolic ribosome"/>
    <property type="evidence" value="ECO:0007005"/>
    <property type="project" value="TAIR"/>
</dbReference>
<dbReference type="GO" id="GO:0005794">
    <property type="term" value="C:Golgi apparatus"/>
    <property type="evidence" value="ECO:0007005"/>
    <property type="project" value="TAIR"/>
</dbReference>
<dbReference type="GO" id="GO:0016363">
    <property type="term" value="C:nuclear matrix"/>
    <property type="evidence" value="ECO:0000314"/>
    <property type="project" value="UniProtKB"/>
</dbReference>
<dbReference type="GO" id="GO:0009505">
    <property type="term" value="C:plant-type cell wall"/>
    <property type="evidence" value="ECO:0007005"/>
    <property type="project" value="TAIR"/>
</dbReference>
<dbReference type="GO" id="GO:0000325">
    <property type="term" value="C:plant-type vacuole"/>
    <property type="evidence" value="ECO:0007005"/>
    <property type="project" value="TAIR"/>
</dbReference>
<dbReference type="GO" id="GO:0005886">
    <property type="term" value="C:plasma membrane"/>
    <property type="evidence" value="ECO:0007005"/>
    <property type="project" value="TAIR"/>
</dbReference>
<dbReference type="GO" id="GO:0009506">
    <property type="term" value="C:plasmodesma"/>
    <property type="evidence" value="ECO:0007005"/>
    <property type="project" value="TAIR"/>
</dbReference>
<dbReference type="GO" id="GO:0005773">
    <property type="term" value="C:vacuole"/>
    <property type="evidence" value="ECO:0007005"/>
    <property type="project" value="TAIR"/>
</dbReference>
<dbReference type="GO" id="GO:0005524">
    <property type="term" value="F:ATP binding"/>
    <property type="evidence" value="ECO:0007669"/>
    <property type="project" value="UniProtKB-KW"/>
</dbReference>
<dbReference type="GO" id="GO:0140662">
    <property type="term" value="F:ATP-dependent protein folding chaperone"/>
    <property type="evidence" value="ECO:0007669"/>
    <property type="project" value="InterPro"/>
</dbReference>
<dbReference type="GO" id="GO:0003729">
    <property type="term" value="F:mRNA binding"/>
    <property type="evidence" value="ECO:0000314"/>
    <property type="project" value="TAIR"/>
</dbReference>
<dbReference type="GO" id="GO:0002020">
    <property type="term" value="F:protease binding"/>
    <property type="evidence" value="ECO:0000353"/>
    <property type="project" value="UniProtKB"/>
</dbReference>
<dbReference type="GO" id="GO:0009408">
    <property type="term" value="P:response to heat"/>
    <property type="evidence" value="ECO:0000270"/>
    <property type="project" value="UniProtKB"/>
</dbReference>
<dbReference type="GO" id="GO:0009615">
    <property type="term" value="P:response to virus"/>
    <property type="evidence" value="ECO:0000270"/>
    <property type="project" value="UniProtKB"/>
</dbReference>
<dbReference type="CDD" id="cd10233">
    <property type="entry name" value="ASKHA_NBD_HSP70_HSPA1"/>
    <property type="match status" value="1"/>
</dbReference>
<dbReference type="FunFam" id="2.60.34.10:FF:000002">
    <property type="entry name" value="Heat shock 70 kDa"/>
    <property type="match status" value="1"/>
</dbReference>
<dbReference type="FunFam" id="3.90.640.10:FF:000002">
    <property type="entry name" value="Heat shock 70 kDa"/>
    <property type="match status" value="1"/>
</dbReference>
<dbReference type="FunFam" id="1.20.1270.10:FF:000028">
    <property type="entry name" value="Heat shock 70 kDa protein"/>
    <property type="match status" value="1"/>
</dbReference>
<dbReference type="FunFam" id="3.30.420.40:FF:000172">
    <property type="entry name" value="Heat shock 70 kDa protein"/>
    <property type="match status" value="1"/>
</dbReference>
<dbReference type="FunFam" id="3.30.30.30:FF:000001">
    <property type="entry name" value="heat shock 70 kDa protein-like"/>
    <property type="match status" value="1"/>
</dbReference>
<dbReference type="FunFam" id="3.30.420.40:FF:000465">
    <property type="entry name" value="Heat shock cognate 70 kDa protein 2"/>
    <property type="match status" value="1"/>
</dbReference>
<dbReference type="FunFam" id="3.30.420.40:FF:000026">
    <property type="entry name" value="Heat shock protein 70"/>
    <property type="match status" value="1"/>
</dbReference>
<dbReference type="Gene3D" id="1.20.1270.10">
    <property type="match status" value="1"/>
</dbReference>
<dbReference type="Gene3D" id="3.30.30.30">
    <property type="match status" value="1"/>
</dbReference>
<dbReference type="Gene3D" id="3.30.420.40">
    <property type="match status" value="2"/>
</dbReference>
<dbReference type="Gene3D" id="3.90.640.10">
    <property type="entry name" value="Actin, Chain A, domain 4"/>
    <property type="match status" value="1"/>
</dbReference>
<dbReference type="Gene3D" id="2.60.34.10">
    <property type="entry name" value="Substrate Binding Domain Of DNAk, Chain A, domain 1"/>
    <property type="match status" value="1"/>
</dbReference>
<dbReference type="InterPro" id="IPR043129">
    <property type="entry name" value="ATPase_NBD"/>
</dbReference>
<dbReference type="InterPro" id="IPR018181">
    <property type="entry name" value="Heat_shock_70_CS"/>
</dbReference>
<dbReference type="InterPro" id="IPR029048">
    <property type="entry name" value="HSP70_C_sf"/>
</dbReference>
<dbReference type="InterPro" id="IPR029047">
    <property type="entry name" value="HSP70_peptide-bd_sf"/>
</dbReference>
<dbReference type="InterPro" id="IPR013126">
    <property type="entry name" value="Hsp_70_fam"/>
</dbReference>
<dbReference type="NCBIfam" id="NF001413">
    <property type="entry name" value="PRK00290.1"/>
    <property type="match status" value="1"/>
</dbReference>
<dbReference type="PANTHER" id="PTHR19375">
    <property type="entry name" value="HEAT SHOCK PROTEIN 70KDA"/>
    <property type="match status" value="1"/>
</dbReference>
<dbReference type="Pfam" id="PF00012">
    <property type="entry name" value="HSP70"/>
    <property type="match status" value="1"/>
</dbReference>
<dbReference type="PRINTS" id="PR00301">
    <property type="entry name" value="HEATSHOCK70"/>
</dbReference>
<dbReference type="SUPFAM" id="SSF53067">
    <property type="entry name" value="Actin-like ATPase domain"/>
    <property type="match status" value="2"/>
</dbReference>
<dbReference type="SUPFAM" id="SSF100934">
    <property type="entry name" value="Heat shock protein 70kD (HSP70), C-terminal subdomain"/>
    <property type="match status" value="1"/>
</dbReference>
<dbReference type="SUPFAM" id="SSF100920">
    <property type="entry name" value="Heat shock protein 70kD (HSP70), peptide-binding domain"/>
    <property type="match status" value="1"/>
</dbReference>
<dbReference type="PROSITE" id="PS00297">
    <property type="entry name" value="HSP70_1"/>
    <property type="match status" value="1"/>
</dbReference>
<dbReference type="PROSITE" id="PS00329">
    <property type="entry name" value="HSP70_2"/>
    <property type="match status" value="1"/>
</dbReference>
<dbReference type="PROSITE" id="PS01036">
    <property type="entry name" value="HSP70_3"/>
    <property type="match status" value="1"/>
</dbReference>
<gene>
    <name evidence="10 12" type="primary">HSP70-3</name>
    <name evidence="11" type="synonym">HSC70-3</name>
    <name type="synonym">HSC70-G7</name>
    <name evidence="15" type="ordered locus">At3g09440</name>
    <name evidence="17" type="ORF">F11F8</name>
    <name evidence="16" type="ORF">F3L24.33</name>
</gene>
<accession>O65719</accession>
<accession>Q42345</accession>
<accession>Q56WH5</accession>
<accession>Q96267</accession>
<proteinExistence type="evidence at protein level"/>
<sequence>MAGKGEGPAIGIDLGTTYSCVGVWQHDRVEIIANDQGNRTTPSYVAFTDSERLIGDAAKNQVAMNPINTVFDAKRLIGRRFTDSSVQSDIKLWPFTLKSGPAEKPMIVVNYKGEDKEFSAEEISSMILIKMREIAEAYLGTTIKNAVVTVPAYFNDSQRQATKDAGVIAGLNVMRIINEPTAAAIAYGLDKKATSVGEKNVLIFDLGGGTFDVSLLTIEEGIFEVKATAGDTHLGGEDFDNRMVNHFVQEFKRKNKKDISGNPRALRRLRTACERAKRTLSSTAQTTIEIDSLFDGIDFYAPITRARFEELNIDLFRKCMEPVEKCLRDAKMDKNSIDDVVLVGGSTRIPKVQQLLVDFFNGKELCKSINPDEAVAYGAAVQAAILSGEGNEKVQDLLLLDVTPLSLGLETAGGVMTVLIQRNTTIPTKKEQVFSTYSDNQPGVLIQVYEGERARTKDNNLLGKFELSGIPPAPRGVPQITVCFDIDANGILNVSAEDKTTGQKNKITITNDKGRLSKDEIEKMVQEAEKYKSEDEEHKKKVDAKNALENYAYNMRNTIRDEKIGEKLAGDDKKKIEDSIEAAIEWLEANQLAECDEFEDKMKELESICNPIIAKMYQGGEAGGPAAGGMDEDVPPSAGGAGPKIEEVD</sequence>
<protein>
    <recommendedName>
        <fullName evidence="10 12">Heat shock 70 kDa protein 3</fullName>
        <shortName evidence="10 12">AtHsp70-3</shortName>
        <shortName evidence="10 12">Heat shock protein 70-3</shortName>
    </recommendedName>
    <alternativeName>
        <fullName evidence="11">Heat shock cognate 70 kDa protein 3</fullName>
        <shortName evidence="11">AtHsc70-3</shortName>
        <shortName evidence="11">Heat shock cognate protein 70-3</shortName>
    </alternativeName>
</protein>
<keyword id="KW-0067">ATP-binding</keyword>
<keyword id="KW-0143">Chaperone</keyword>
<keyword id="KW-0963">Cytoplasm</keyword>
<keyword id="KW-0547">Nucleotide-binding</keyword>
<keyword id="KW-0539">Nucleus</keyword>
<keyword id="KW-1185">Reference proteome</keyword>
<keyword id="KW-0346">Stress response</keyword>
<name>HSP7C_ARATH</name>
<feature type="chain" id="PRO_0000078346" description="Heat shock 70 kDa protein 3">
    <location>
        <begin position="1"/>
        <end position="649"/>
    </location>
</feature>
<feature type="region of interest" description="Disordered" evidence="1">
    <location>
        <begin position="619"/>
        <end position="649"/>
    </location>
</feature>
<feature type="sequence conflict" description="In Ref. 5; CAA23383." evidence="13" ref="5">
    <original>GEDKE</original>
    <variation>EKIKS</variation>
    <location>
        <begin position="113"/>
        <end position="117"/>
    </location>
</feature>
<feature type="sequence conflict" description="In Ref. 7; CAA70111." evidence="13" ref="7">
    <original>R</original>
    <variation>T</variation>
    <location>
        <position position="556"/>
    </location>
</feature>